<protein>
    <recommendedName>
        <fullName evidence="1">Peptidyl-tRNA hydrolase</fullName>
        <shortName evidence="1">PTH</shortName>
        <ecNumber evidence="1">3.1.1.29</ecNumber>
    </recommendedName>
</protein>
<comment type="function">
    <text evidence="1">The natural substrate for this enzyme may be peptidyl-tRNAs which drop off the ribosome during protein synthesis.</text>
</comment>
<comment type="catalytic activity">
    <reaction evidence="1">
        <text>an N-acyl-L-alpha-aminoacyl-tRNA + H2O = an N-acyl-L-amino acid + a tRNA + H(+)</text>
        <dbReference type="Rhea" id="RHEA:54448"/>
        <dbReference type="Rhea" id="RHEA-COMP:10123"/>
        <dbReference type="Rhea" id="RHEA-COMP:13883"/>
        <dbReference type="ChEBI" id="CHEBI:15377"/>
        <dbReference type="ChEBI" id="CHEBI:15378"/>
        <dbReference type="ChEBI" id="CHEBI:59874"/>
        <dbReference type="ChEBI" id="CHEBI:78442"/>
        <dbReference type="ChEBI" id="CHEBI:138191"/>
        <dbReference type="EC" id="3.1.1.29"/>
    </reaction>
</comment>
<comment type="subcellular location">
    <subcellularLocation>
        <location evidence="1">Cytoplasm</location>
    </subcellularLocation>
</comment>
<comment type="similarity">
    <text evidence="1">Belongs to the PTH2 family.</text>
</comment>
<name>PTH_PYRHO</name>
<accession>O74017</accession>
<gene>
    <name evidence="1" type="primary">pth</name>
    <name type="ordered locus">PH1539</name>
</gene>
<keyword id="KW-0002">3D-structure</keyword>
<keyword id="KW-0963">Cytoplasm</keyword>
<keyword id="KW-0378">Hydrolase</keyword>
<proteinExistence type="evidence at protein level"/>
<sequence length="121" mass="13377">MIKMFKYKQVIVARADLKLSKGKLAAQVAHGAVTAAFEAYKKKREWFEAWFREGQKKVVVKVESEEELFKLKAEAEKLGLPNALIRDAGLTEIPPGTVTVLAVGPAPEEIVDKVTGNLKLL</sequence>
<organism>
    <name type="scientific">Pyrococcus horikoshii (strain ATCC 700860 / DSM 12428 / JCM 9974 / NBRC 100139 / OT-3)</name>
    <dbReference type="NCBI Taxonomy" id="70601"/>
    <lineage>
        <taxon>Archaea</taxon>
        <taxon>Methanobacteriati</taxon>
        <taxon>Methanobacteriota</taxon>
        <taxon>Thermococci</taxon>
        <taxon>Thermococcales</taxon>
        <taxon>Thermococcaceae</taxon>
        <taxon>Pyrococcus</taxon>
    </lineage>
</organism>
<evidence type="ECO:0000255" key="1">
    <source>
        <dbReference type="HAMAP-Rule" id="MF_00628"/>
    </source>
</evidence>
<evidence type="ECO:0007829" key="2">
    <source>
        <dbReference type="PDB" id="1WN2"/>
    </source>
</evidence>
<reference key="1">
    <citation type="journal article" date="1998" name="DNA Res.">
        <title>Complete sequence and gene organization of the genome of a hyper-thermophilic archaebacterium, Pyrococcus horikoshii OT3.</title>
        <authorList>
            <person name="Kawarabayasi Y."/>
            <person name="Sawada M."/>
            <person name="Horikawa H."/>
            <person name="Haikawa Y."/>
            <person name="Hino Y."/>
            <person name="Yamamoto S."/>
            <person name="Sekine M."/>
            <person name="Baba S."/>
            <person name="Kosugi H."/>
            <person name="Hosoyama A."/>
            <person name="Nagai Y."/>
            <person name="Sakai M."/>
            <person name="Ogura K."/>
            <person name="Otsuka R."/>
            <person name="Nakazawa H."/>
            <person name="Takamiya M."/>
            <person name="Ohfuku Y."/>
            <person name="Funahashi T."/>
            <person name="Tanaka T."/>
            <person name="Kudoh Y."/>
            <person name="Yamazaki J."/>
            <person name="Kushida N."/>
            <person name="Oguchi A."/>
            <person name="Aoki K."/>
            <person name="Yoshizawa T."/>
            <person name="Nakamura Y."/>
            <person name="Robb F.T."/>
            <person name="Horikoshi K."/>
            <person name="Masuchi Y."/>
            <person name="Shizuya H."/>
            <person name="Kikuchi H."/>
        </authorList>
    </citation>
    <scope>NUCLEOTIDE SEQUENCE [LARGE SCALE GENOMIC DNA]</scope>
    <source>
        <strain>ATCC 700860 / DSM 12428 / JCM 9974 / NBRC 100139 / OT-3</strain>
    </source>
</reference>
<feature type="chain" id="PRO_0000120301" description="Peptidyl-tRNA hydrolase">
    <location>
        <begin position="1"/>
        <end position="121"/>
    </location>
</feature>
<feature type="strand" evidence="2">
    <location>
        <begin position="7"/>
        <end position="17"/>
    </location>
</feature>
<feature type="helix" evidence="2">
    <location>
        <begin position="21"/>
        <end position="42"/>
    </location>
</feature>
<feature type="helix" evidence="2">
    <location>
        <begin position="44"/>
        <end position="52"/>
    </location>
</feature>
<feature type="strand" evidence="2">
    <location>
        <begin position="57"/>
        <end position="64"/>
    </location>
</feature>
<feature type="helix" evidence="2">
    <location>
        <begin position="65"/>
        <end position="77"/>
    </location>
</feature>
<feature type="strand" evidence="2">
    <location>
        <begin position="82"/>
        <end position="86"/>
    </location>
</feature>
<feature type="strand" evidence="2">
    <location>
        <begin position="98"/>
        <end position="107"/>
    </location>
</feature>
<feature type="helix" evidence="2">
    <location>
        <begin position="108"/>
        <end position="115"/>
    </location>
</feature>
<feature type="strand" evidence="2">
    <location>
        <begin position="118"/>
        <end position="120"/>
    </location>
</feature>
<dbReference type="EC" id="3.1.1.29" evidence="1"/>
<dbReference type="EMBL" id="BA000001">
    <property type="protein sequence ID" value="BAA30649.1"/>
    <property type="molecule type" value="Genomic_DNA"/>
</dbReference>
<dbReference type="PIR" id="A71031">
    <property type="entry name" value="A71031"/>
</dbReference>
<dbReference type="PDB" id="1WN2">
    <property type="method" value="X-ray"/>
    <property type="resolution" value="1.20 A"/>
    <property type="chains" value="A=1-121"/>
</dbReference>
<dbReference type="PDB" id="2D3K">
    <property type="method" value="X-ray"/>
    <property type="resolution" value="1.90 A"/>
    <property type="chains" value="A/B=1-121"/>
</dbReference>
<dbReference type="PDBsum" id="1WN2"/>
<dbReference type="PDBsum" id="2D3K"/>
<dbReference type="SMR" id="O74017"/>
<dbReference type="STRING" id="70601.gene:9378524"/>
<dbReference type="EnsemblBacteria" id="BAA30649">
    <property type="protein sequence ID" value="BAA30649"/>
    <property type="gene ID" value="BAA30649"/>
</dbReference>
<dbReference type="KEGG" id="pho:PH1539"/>
<dbReference type="eggNOG" id="arCOG04228">
    <property type="taxonomic scope" value="Archaea"/>
</dbReference>
<dbReference type="BRENDA" id="3.1.1.29">
    <property type="organism ID" value="5244"/>
</dbReference>
<dbReference type="EvolutionaryTrace" id="O74017"/>
<dbReference type="Proteomes" id="UP000000752">
    <property type="component" value="Chromosome"/>
</dbReference>
<dbReference type="GO" id="GO:0005829">
    <property type="term" value="C:cytosol"/>
    <property type="evidence" value="ECO:0007669"/>
    <property type="project" value="TreeGrafter"/>
</dbReference>
<dbReference type="GO" id="GO:0004045">
    <property type="term" value="F:peptidyl-tRNA hydrolase activity"/>
    <property type="evidence" value="ECO:0007669"/>
    <property type="project" value="UniProtKB-UniRule"/>
</dbReference>
<dbReference type="GO" id="GO:0006412">
    <property type="term" value="P:translation"/>
    <property type="evidence" value="ECO:0007669"/>
    <property type="project" value="UniProtKB-UniRule"/>
</dbReference>
<dbReference type="CDD" id="cd02430">
    <property type="entry name" value="PTH2"/>
    <property type="match status" value="1"/>
</dbReference>
<dbReference type="FunFam" id="3.40.1490.10:FF:000001">
    <property type="entry name" value="Peptidyl-tRNA hydrolase 2"/>
    <property type="match status" value="1"/>
</dbReference>
<dbReference type="Gene3D" id="3.40.1490.10">
    <property type="entry name" value="Bit1"/>
    <property type="match status" value="1"/>
</dbReference>
<dbReference type="HAMAP" id="MF_00628">
    <property type="entry name" value="Pept_tRNA_hydro_arch"/>
    <property type="match status" value="1"/>
</dbReference>
<dbReference type="InterPro" id="IPR023476">
    <property type="entry name" value="Pep_tRNA_hydro_II_dom_sf"/>
</dbReference>
<dbReference type="InterPro" id="IPR034759">
    <property type="entry name" value="Pept_tRNA_hydro_arch"/>
</dbReference>
<dbReference type="InterPro" id="IPR002833">
    <property type="entry name" value="PTH2"/>
</dbReference>
<dbReference type="NCBIfam" id="TIGR00283">
    <property type="entry name" value="arch_pth2"/>
    <property type="match status" value="1"/>
</dbReference>
<dbReference type="NCBIfam" id="NF003314">
    <property type="entry name" value="PRK04322.1"/>
    <property type="match status" value="1"/>
</dbReference>
<dbReference type="PANTHER" id="PTHR12649">
    <property type="entry name" value="PEPTIDYL-TRNA HYDROLASE 2"/>
    <property type="match status" value="1"/>
</dbReference>
<dbReference type="PANTHER" id="PTHR12649:SF11">
    <property type="entry name" value="PEPTIDYL-TRNA HYDROLASE 2, MITOCHONDRIAL"/>
    <property type="match status" value="1"/>
</dbReference>
<dbReference type="Pfam" id="PF01981">
    <property type="entry name" value="PTH2"/>
    <property type="match status" value="1"/>
</dbReference>
<dbReference type="SUPFAM" id="SSF102462">
    <property type="entry name" value="Peptidyl-tRNA hydrolase II"/>
    <property type="match status" value="1"/>
</dbReference>